<dbReference type="EC" id="7.1.1.-" evidence="1"/>
<dbReference type="EMBL" id="AP009371">
    <property type="protein sequence ID" value="BAF50254.1"/>
    <property type="molecule type" value="Genomic_DNA"/>
</dbReference>
<dbReference type="RefSeq" id="YP_001123429.1">
    <property type="nucleotide sequence ID" value="NC_009270.1"/>
</dbReference>
<dbReference type="SMR" id="A4QKP9"/>
<dbReference type="GeneID" id="4961676"/>
<dbReference type="GO" id="GO:0009535">
    <property type="term" value="C:chloroplast thylakoid membrane"/>
    <property type="evidence" value="ECO:0007669"/>
    <property type="project" value="UniProtKB-SubCell"/>
</dbReference>
<dbReference type="GO" id="GO:0051539">
    <property type="term" value="F:4 iron, 4 sulfur cluster binding"/>
    <property type="evidence" value="ECO:0007669"/>
    <property type="project" value="UniProtKB-KW"/>
</dbReference>
<dbReference type="GO" id="GO:0005506">
    <property type="term" value="F:iron ion binding"/>
    <property type="evidence" value="ECO:0007669"/>
    <property type="project" value="UniProtKB-UniRule"/>
</dbReference>
<dbReference type="GO" id="GO:0008137">
    <property type="term" value="F:NADH dehydrogenase (ubiquinone) activity"/>
    <property type="evidence" value="ECO:0007669"/>
    <property type="project" value="InterPro"/>
</dbReference>
<dbReference type="GO" id="GO:0048038">
    <property type="term" value="F:quinone binding"/>
    <property type="evidence" value="ECO:0007669"/>
    <property type="project" value="UniProtKB-KW"/>
</dbReference>
<dbReference type="GO" id="GO:0019684">
    <property type="term" value="P:photosynthesis, light reaction"/>
    <property type="evidence" value="ECO:0007669"/>
    <property type="project" value="UniProtKB-UniRule"/>
</dbReference>
<dbReference type="FunFam" id="3.30.70.3270:FF:000006">
    <property type="entry name" value="NAD(P)H-quinone oxidoreductase subunit I, chloroplastic"/>
    <property type="match status" value="1"/>
</dbReference>
<dbReference type="Gene3D" id="3.30.70.3270">
    <property type="match status" value="1"/>
</dbReference>
<dbReference type="HAMAP" id="MF_01351">
    <property type="entry name" value="NDH1_NuoI"/>
    <property type="match status" value="1"/>
</dbReference>
<dbReference type="InterPro" id="IPR017896">
    <property type="entry name" value="4Fe4S_Fe-S-bd"/>
</dbReference>
<dbReference type="InterPro" id="IPR017900">
    <property type="entry name" value="4Fe4S_Fe_S_CS"/>
</dbReference>
<dbReference type="InterPro" id="IPR010226">
    <property type="entry name" value="NADH_quinone_OxRdtase_chainI"/>
</dbReference>
<dbReference type="InterPro" id="IPR004497">
    <property type="entry name" value="NDHI"/>
</dbReference>
<dbReference type="NCBIfam" id="TIGR00403">
    <property type="entry name" value="ndhI"/>
    <property type="match status" value="1"/>
</dbReference>
<dbReference type="NCBIfam" id="TIGR01971">
    <property type="entry name" value="NuoI"/>
    <property type="match status" value="1"/>
</dbReference>
<dbReference type="NCBIfam" id="NF004537">
    <property type="entry name" value="PRK05888.1-3"/>
    <property type="match status" value="1"/>
</dbReference>
<dbReference type="PANTHER" id="PTHR47275">
    <property type="entry name" value="NAD(P)H-QUINONE OXIDOREDUCTASE SUBUNIT I, CHLOROPLASTIC"/>
    <property type="match status" value="1"/>
</dbReference>
<dbReference type="PANTHER" id="PTHR47275:SF1">
    <property type="entry name" value="NAD(P)H-QUINONE OXIDOREDUCTASE SUBUNIT I, CHLOROPLASTIC"/>
    <property type="match status" value="1"/>
</dbReference>
<dbReference type="Pfam" id="PF13187">
    <property type="entry name" value="Fer4_9"/>
    <property type="match status" value="1"/>
</dbReference>
<dbReference type="SUPFAM" id="SSF54862">
    <property type="entry name" value="4Fe-4S ferredoxins"/>
    <property type="match status" value="1"/>
</dbReference>
<dbReference type="PROSITE" id="PS00198">
    <property type="entry name" value="4FE4S_FER_1"/>
    <property type="match status" value="2"/>
</dbReference>
<dbReference type="PROSITE" id="PS51379">
    <property type="entry name" value="4FE4S_FER_2"/>
    <property type="match status" value="2"/>
</dbReference>
<feature type="chain" id="PRO_0000298571" description="NAD(P)H-quinone oxidoreductase subunit I, chloroplastic">
    <location>
        <begin position="1"/>
        <end position="172"/>
    </location>
</feature>
<feature type="domain" description="4Fe-4S ferredoxin-type 1" evidence="1">
    <location>
        <begin position="55"/>
        <end position="84"/>
    </location>
</feature>
<feature type="domain" description="4Fe-4S ferredoxin-type 2" evidence="1">
    <location>
        <begin position="95"/>
        <end position="124"/>
    </location>
</feature>
<feature type="binding site" evidence="1">
    <location>
        <position position="64"/>
    </location>
    <ligand>
        <name>[4Fe-4S] cluster</name>
        <dbReference type="ChEBI" id="CHEBI:49883"/>
        <label>1</label>
    </ligand>
</feature>
<feature type="binding site" evidence="1">
    <location>
        <position position="67"/>
    </location>
    <ligand>
        <name>[4Fe-4S] cluster</name>
        <dbReference type="ChEBI" id="CHEBI:49883"/>
        <label>1</label>
    </ligand>
</feature>
<feature type="binding site" evidence="1">
    <location>
        <position position="70"/>
    </location>
    <ligand>
        <name>[4Fe-4S] cluster</name>
        <dbReference type="ChEBI" id="CHEBI:49883"/>
        <label>1</label>
    </ligand>
</feature>
<feature type="binding site" evidence="1">
    <location>
        <position position="74"/>
    </location>
    <ligand>
        <name>[4Fe-4S] cluster</name>
        <dbReference type="ChEBI" id="CHEBI:49883"/>
        <label>2</label>
    </ligand>
</feature>
<feature type="binding site" evidence="1">
    <location>
        <position position="104"/>
    </location>
    <ligand>
        <name>[4Fe-4S] cluster</name>
        <dbReference type="ChEBI" id="CHEBI:49883"/>
        <label>2</label>
    </ligand>
</feature>
<feature type="binding site" evidence="1">
    <location>
        <position position="107"/>
    </location>
    <ligand>
        <name>[4Fe-4S] cluster</name>
        <dbReference type="ChEBI" id="CHEBI:49883"/>
        <label>2</label>
    </ligand>
</feature>
<feature type="binding site" evidence="1">
    <location>
        <position position="110"/>
    </location>
    <ligand>
        <name>[4Fe-4S] cluster</name>
        <dbReference type="ChEBI" id="CHEBI:49883"/>
        <label>2</label>
    </ligand>
</feature>
<feature type="binding site" evidence="1">
    <location>
        <position position="114"/>
    </location>
    <ligand>
        <name>[4Fe-4S] cluster</name>
        <dbReference type="ChEBI" id="CHEBI:49883"/>
        <label>1</label>
    </ligand>
</feature>
<proteinExistence type="inferred from homology"/>
<accession>A4QKP9</accession>
<organism>
    <name type="scientific">Capsella bursa-pastoris</name>
    <name type="common">Shepherd's purse</name>
    <name type="synonym">Thlaspi bursa-pastoris</name>
    <dbReference type="NCBI Taxonomy" id="3719"/>
    <lineage>
        <taxon>Eukaryota</taxon>
        <taxon>Viridiplantae</taxon>
        <taxon>Streptophyta</taxon>
        <taxon>Embryophyta</taxon>
        <taxon>Tracheophyta</taxon>
        <taxon>Spermatophyta</taxon>
        <taxon>Magnoliopsida</taxon>
        <taxon>eudicotyledons</taxon>
        <taxon>Gunneridae</taxon>
        <taxon>Pentapetalae</taxon>
        <taxon>rosids</taxon>
        <taxon>malvids</taxon>
        <taxon>Brassicales</taxon>
        <taxon>Brassicaceae</taxon>
        <taxon>Camelineae</taxon>
        <taxon>Capsella</taxon>
    </lineage>
</organism>
<reference key="1">
    <citation type="submission" date="2007-03" db="EMBL/GenBank/DDBJ databases">
        <title>Sequencing analysis of Capsella bursa-pastoris JO22 chloroplast DNA.</title>
        <authorList>
            <person name="Hosouchi T."/>
            <person name="Tsuruoka H."/>
            <person name="Kotani H."/>
        </authorList>
    </citation>
    <scope>NUCLEOTIDE SEQUENCE [LARGE SCALE GENOMIC DNA]</scope>
</reference>
<keyword id="KW-0004">4Fe-4S</keyword>
<keyword id="KW-0150">Chloroplast</keyword>
<keyword id="KW-0408">Iron</keyword>
<keyword id="KW-0411">Iron-sulfur</keyword>
<keyword id="KW-0472">Membrane</keyword>
<keyword id="KW-0479">Metal-binding</keyword>
<keyword id="KW-0520">NAD</keyword>
<keyword id="KW-0521">NADP</keyword>
<keyword id="KW-0934">Plastid</keyword>
<keyword id="KW-0618">Plastoquinone</keyword>
<keyword id="KW-0874">Quinone</keyword>
<keyword id="KW-0677">Repeat</keyword>
<keyword id="KW-0793">Thylakoid</keyword>
<keyword id="KW-1278">Translocase</keyword>
<name>NDHI_CAPBU</name>
<gene>
    <name evidence="1" type="primary">ndhI</name>
</gene>
<evidence type="ECO:0000255" key="1">
    <source>
        <dbReference type="HAMAP-Rule" id="MF_01351"/>
    </source>
</evidence>
<protein>
    <recommendedName>
        <fullName evidence="1">NAD(P)H-quinone oxidoreductase subunit I, chloroplastic</fullName>
        <ecNumber evidence="1">7.1.1.-</ecNumber>
    </recommendedName>
    <alternativeName>
        <fullName evidence="1">NAD(P)H dehydrogenase subunit I</fullName>
        <shortName evidence="1">NDH subunit I</shortName>
    </alternativeName>
    <alternativeName>
        <fullName evidence="1">NADH-plastoquinone oxidoreductase subunit I</fullName>
    </alternativeName>
</protein>
<geneLocation type="chloroplast"/>
<comment type="function">
    <text evidence="1">NDH shuttles electrons from NAD(P)H:plastoquinone, via FMN and iron-sulfur (Fe-S) centers, to quinones in the photosynthetic chain and possibly in a chloroplast respiratory chain. The immediate electron acceptor for the enzyme in this species is believed to be plastoquinone. Couples the redox reaction to proton translocation, and thus conserves the redox energy in a proton gradient.</text>
</comment>
<comment type="catalytic activity">
    <reaction evidence="1">
        <text>a plastoquinone + NADH + (n+1) H(+)(in) = a plastoquinol + NAD(+) + n H(+)(out)</text>
        <dbReference type="Rhea" id="RHEA:42608"/>
        <dbReference type="Rhea" id="RHEA-COMP:9561"/>
        <dbReference type="Rhea" id="RHEA-COMP:9562"/>
        <dbReference type="ChEBI" id="CHEBI:15378"/>
        <dbReference type="ChEBI" id="CHEBI:17757"/>
        <dbReference type="ChEBI" id="CHEBI:57540"/>
        <dbReference type="ChEBI" id="CHEBI:57945"/>
        <dbReference type="ChEBI" id="CHEBI:62192"/>
    </reaction>
</comment>
<comment type="catalytic activity">
    <reaction evidence="1">
        <text>a plastoquinone + NADPH + (n+1) H(+)(in) = a plastoquinol + NADP(+) + n H(+)(out)</text>
        <dbReference type="Rhea" id="RHEA:42612"/>
        <dbReference type="Rhea" id="RHEA-COMP:9561"/>
        <dbReference type="Rhea" id="RHEA-COMP:9562"/>
        <dbReference type="ChEBI" id="CHEBI:15378"/>
        <dbReference type="ChEBI" id="CHEBI:17757"/>
        <dbReference type="ChEBI" id="CHEBI:57783"/>
        <dbReference type="ChEBI" id="CHEBI:58349"/>
        <dbReference type="ChEBI" id="CHEBI:62192"/>
    </reaction>
</comment>
<comment type="cofactor">
    <cofactor evidence="1">
        <name>[4Fe-4S] cluster</name>
        <dbReference type="ChEBI" id="CHEBI:49883"/>
    </cofactor>
    <text evidence="1">Binds 2 [4Fe-4S] clusters per subunit.</text>
</comment>
<comment type="subunit">
    <text evidence="1">NDH is composed of at least 16 different subunits, 5 of which are encoded in the nucleus.</text>
</comment>
<comment type="subcellular location">
    <subcellularLocation>
        <location evidence="1">Plastid</location>
        <location evidence="1">Chloroplast thylakoid membrane</location>
        <topology evidence="1">Peripheral membrane protein</topology>
    </subcellularLocation>
</comment>
<comment type="similarity">
    <text evidence="1">Belongs to the complex I 23 kDa subunit family.</text>
</comment>
<sequence length="172" mass="19999">MLPMITGFMNYGQQTLRAARYIGQGFMITLSHTNRLPVTIQYPYEKLITSERFRGRIHFEFDKCIACEVCVRVCPIDLPVVDWKLETNIRKKRLLNYSIDFGICIFCGNCVEYCPTNCLSMTEEYEFSTYDRHELNYNQIALGRLPMSVIDDYTVRTILNSPQTKNGVNPLI</sequence>